<sequence length="124" mass="13749">MATINQLVRKPRVKKVVKSNVPALEACPQKRGVCTRVYTTTPKKPNSALRKVCRIRLTNGFEVTSYIGGEGHNLQEHSVVLIRGGRVKDLPGVRYHTVRGALDCAGVKDRKQGRSKYGVKRPKA</sequence>
<organism>
    <name type="scientific">Actinobacillus pleuropneumoniae serotype 7 (strain AP76)</name>
    <dbReference type="NCBI Taxonomy" id="537457"/>
    <lineage>
        <taxon>Bacteria</taxon>
        <taxon>Pseudomonadati</taxon>
        <taxon>Pseudomonadota</taxon>
        <taxon>Gammaproteobacteria</taxon>
        <taxon>Pasteurellales</taxon>
        <taxon>Pasteurellaceae</taxon>
        <taxon>Actinobacillus</taxon>
    </lineage>
</organism>
<proteinExistence type="inferred from homology"/>
<gene>
    <name evidence="2" type="primary">rpsL</name>
    <name type="ordered locus">APP7_1538</name>
</gene>
<accession>B3H2G5</accession>
<keyword id="KW-0488">Methylation</keyword>
<keyword id="KW-0687">Ribonucleoprotein</keyword>
<keyword id="KW-0689">Ribosomal protein</keyword>
<keyword id="KW-0694">RNA-binding</keyword>
<keyword id="KW-0699">rRNA-binding</keyword>
<keyword id="KW-0820">tRNA-binding</keyword>
<name>RS12_ACTP7</name>
<protein>
    <recommendedName>
        <fullName evidence="2">Small ribosomal subunit protein uS12</fullName>
    </recommendedName>
    <alternativeName>
        <fullName evidence="3">30S ribosomal protein S12</fullName>
    </alternativeName>
</protein>
<reference key="1">
    <citation type="submission" date="2008-06" db="EMBL/GenBank/DDBJ databases">
        <title>Genome and proteome analysis of A. pleuropneumoniae serotype 7.</title>
        <authorList>
            <person name="Linke B."/>
            <person name="Buettner F."/>
            <person name="Martinez-Arias R."/>
            <person name="Goesmann A."/>
            <person name="Baltes N."/>
            <person name="Tegetmeyer H."/>
            <person name="Singh M."/>
            <person name="Gerlach G.F."/>
        </authorList>
    </citation>
    <scope>NUCLEOTIDE SEQUENCE [LARGE SCALE GENOMIC DNA]</scope>
    <source>
        <strain>AP76</strain>
    </source>
</reference>
<feature type="chain" id="PRO_1000194109" description="Small ribosomal subunit protein uS12">
    <location>
        <begin position="1"/>
        <end position="124"/>
    </location>
</feature>
<feature type="modified residue" description="3-methylthioaspartic acid" evidence="1">
    <location>
        <position position="89"/>
    </location>
</feature>
<dbReference type="EMBL" id="CP001091">
    <property type="protein sequence ID" value="ACE62190.1"/>
    <property type="molecule type" value="Genomic_DNA"/>
</dbReference>
<dbReference type="RefSeq" id="WP_005543325.1">
    <property type="nucleotide sequence ID" value="NC_010939.1"/>
</dbReference>
<dbReference type="SMR" id="B3H2G5"/>
<dbReference type="GeneID" id="93298548"/>
<dbReference type="KEGG" id="apa:APP7_1538"/>
<dbReference type="HOGENOM" id="CLU_104295_1_2_6"/>
<dbReference type="Proteomes" id="UP000001226">
    <property type="component" value="Chromosome"/>
</dbReference>
<dbReference type="GO" id="GO:0015935">
    <property type="term" value="C:small ribosomal subunit"/>
    <property type="evidence" value="ECO:0007669"/>
    <property type="project" value="InterPro"/>
</dbReference>
<dbReference type="GO" id="GO:0019843">
    <property type="term" value="F:rRNA binding"/>
    <property type="evidence" value="ECO:0007669"/>
    <property type="project" value="UniProtKB-UniRule"/>
</dbReference>
<dbReference type="GO" id="GO:0003735">
    <property type="term" value="F:structural constituent of ribosome"/>
    <property type="evidence" value="ECO:0007669"/>
    <property type="project" value="InterPro"/>
</dbReference>
<dbReference type="GO" id="GO:0000049">
    <property type="term" value="F:tRNA binding"/>
    <property type="evidence" value="ECO:0007669"/>
    <property type="project" value="UniProtKB-UniRule"/>
</dbReference>
<dbReference type="GO" id="GO:0006412">
    <property type="term" value="P:translation"/>
    <property type="evidence" value="ECO:0007669"/>
    <property type="project" value="UniProtKB-UniRule"/>
</dbReference>
<dbReference type="CDD" id="cd03368">
    <property type="entry name" value="Ribosomal_S12"/>
    <property type="match status" value="1"/>
</dbReference>
<dbReference type="FunFam" id="2.40.50.140:FF:000001">
    <property type="entry name" value="30S ribosomal protein S12"/>
    <property type="match status" value="1"/>
</dbReference>
<dbReference type="Gene3D" id="2.40.50.140">
    <property type="entry name" value="Nucleic acid-binding proteins"/>
    <property type="match status" value="1"/>
</dbReference>
<dbReference type="HAMAP" id="MF_00403_B">
    <property type="entry name" value="Ribosomal_uS12_B"/>
    <property type="match status" value="1"/>
</dbReference>
<dbReference type="InterPro" id="IPR012340">
    <property type="entry name" value="NA-bd_OB-fold"/>
</dbReference>
<dbReference type="InterPro" id="IPR006032">
    <property type="entry name" value="Ribosomal_uS12"/>
</dbReference>
<dbReference type="InterPro" id="IPR005679">
    <property type="entry name" value="Ribosomal_uS12_bac"/>
</dbReference>
<dbReference type="NCBIfam" id="TIGR00981">
    <property type="entry name" value="rpsL_bact"/>
    <property type="match status" value="1"/>
</dbReference>
<dbReference type="PANTHER" id="PTHR11652">
    <property type="entry name" value="30S RIBOSOMAL PROTEIN S12 FAMILY MEMBER"/>
    <property type="match status" value="1"/>
</dbReference>
<dbReference type="Pfam" id="PF00164">
    <property type="entry name" value="Ribosom_S12_S23"/>
    <property type="match status" value="1"/>
</dbReference>
<dbReference type="PIRSF" id="PIRSF002133">
    <property type="entry name" value="Ribosomal_S12/S23"/>
    <property type="match status" value="1"/>
</dbReference>
<dbReference type="PRINTS" id="PR01034">
    <property type="entry name" value="RIBOSOMALS12"/>
</dbReference>
<dbReference type="SUPFAM" id="SSF50249">
    <property type="entry name" value="Nucleic acid-binding proteins"/>
    <property type="match status" value="1"/>
</dbReference>
<dbReference type="PROSITE" id="PS00055">
    <property type="entry name" value="RIBOSOMAL_S12"/>
    <property type="match status" value="1"/>
</dbReference>
<comment type="function">
    <text evidence="2">With S4 and S5 plays an important role in translational accuracy.</text>
</comment>
<comment type="function">
    <text evidence="2">Interacts with and stabilizes bases of the 16S rRNA that are involved in tRNA selection in the A site and with the mRNA backbone. Located at the interface of the 30S and 50S subunits, it traverses the body of the 30S subunit contacting proteins on the other side and probably holding the rRNA structure together. The combined cluster of proteins S8, S12 and S17 appears to hold together the shoulder and platform of the 30S subunit.</text>
</comment>
<comment type="subunit">
    <text evidence="2">Part of the 30S ribosomal subunit. Contacts proteins S8 and S17. May interact with IF1 in the 30S initiation complex.</text>
</comment>
<comment type="similarity">
    <text evidence="2">Belongs to the universal ribosomal protein uS12 family.</text>
</comment>
<evidence type="ECO:0000250" key="1"/>
<evidence type="ECO:0000255" key="2">
    <source>
        <dbReference type="HAMAP-Rule" id="MF_00403"/>
    </source>
</evidence>
<evidence type="ECO:0000305" key="3"/>